<accession>Q5X963</accession>
<protein>
    <recommendedName>
        <fullName evidence="1">3-demethoxyubiquinol 3-hydroxylase</fullName>
        <shortName evidence="1">DMQ hydroxylase</shortName>
        <ecNumber evidence="1">1.14.99.60</ecNumber>
    </recommendedName>
    <alternativeName>
        <fullName evidence="1">2-nonaprenyl-3-methyl-6-methoxy-1,4-benzoquinol hydroxylase</fullName>
    </alternativeName>
</protein>
<feature type="chain" id="PRO_0000338696" description="3-demethoxyubiquinol 3-hydroxylase">
    <location>
        <begin position="1"/>
        <end position="213"/>
    </location>
</feature>
<feature type="binding site" evidence="1">
    <location>
        <position position="62"/>
    </location>
    <ligand>
        <name>Fe cation</name>
        <dbReference type="ChEBI" id="CHEBI:24875"/>
        <label>1</label>
    </ligand>
</feature>
<feature type="binding site" evidence="1">
    <location>
        <position position="92"/>
    </location>
    <ligand>
        <name>Fe cation</name>
        <dbReference type="ChEBI" id="CHEBI:24875"/>
        <label>1</label>
    </ligand>
</feature>
<feature type="binding site" evidence="1">
    <location>
        <position position="92"/>
    </location>
    <ligand>
        <name>Fe cation</name>
        <dbReference type="ChEBI" id="CHEBI:24875"/>
        <label>2</label>
    </ligand>
</feature>
<feature type="binding site" evidence="1">
    <location>
        <position position="95"/>
    </location>
    <ligand>
        <name>Fe cation</name>
        <dbReference type="ChEBI" id="CHEBI:24875"/>
        <label>1</label>
    </ligand>
</feature>
<feature type="binding site" evidence="1">
    <location>
        <position position="144"/>
    </location>
    <ligand>
        <name>Fe cation</name>
        <dbReference type="ChEBI" id="CHEBI:24875"/>
        <label>2</label>
    </ligand>
</feature>
<feature type="binding site" evidence="1">
    <location>
        <position position="176"/>
    </location>
    <ligand>
        <name>Fe cation</name>
        <dbReference type="ChEBI" id="CHEBI:24875"/>
        <label>1</label>
    </ligand>
</feature>
<feature type="binding site" evidence="1">
    <location>
        <position position="176"/>
    </location>
    <ligand>
        <name>Fe cation</name>
        <dbReference type="ChEBI" id="CHEBI:24875"/>
        <label>2</label>
    </ligand>
</feature>
<feature type="binding site" evidence="1">
    <location>
        <position position="179"/>
    </location>
    <ligand>
        <name>Fe cation</name>
        <dbReference type="ChEBI" id="CHEBI:24875"/>
        <label>2</label>
    </ligand>
</feature>
<gene>
    <name evidence="1" type="primary">coq7</name>
    <name type="ordered locus">lpp0028</name>
</gene>
<sequence>MRTSSFLDRLISEVDSALRTLVLPPKRITTRQSPAENLADTVLSAQEKKHISGLMRVNHAGEVCAQALYQGQALTAQLTHIKEQMASAAAEEVDHLAWCEERLYELGSKPSLLNPIWYCGSVLLGALAGLAGDKVSLGFVAETERQVTAHLQRHLHYLPEKDKKTIAILKRMQEDEEHHAHTAMEAGAVELPYIIKQLMNAVSKLMTQSSYYI</sequence>
<comment type="function">
    <text evidence="1">Catalyzes the hydroxylation of 2-nonaprenyl-3-methyl-6-methoxy-1,4-benzoquinol during ubiquinone biosynthesis.</text>
</comment>
<comment type="catalytic activity">
    <reaction evidence="1">
        <text>a 5-methoxy-2-methyl-3-(all-trans-polyprenyl)benzene-1,4-diol + AH2 + O2 = a 3-demethylubiquinol + A + H2O</text>
        <dbReference type="Rhea" id="RHEA:50908"/>
        <dbReference type="Rhea" id="RHEA-COMP:10859"/>
        <dbReference type="Rhea" id="RHEA-COMP:10914"/>
        <dbReference type="ChEBI" id="CHEBI:13193"/>
        <dbReference type="ChEBI" id="CHEBI:15377"/>
        <dbReference type="ChEBI" id="CHEBI:15379"/>
        <dbReference type="ChEBI" id="CHEBI:17499"/>
        <dbReference type="ChEBI" id="CHEBI:84167"/>
        <dbReference type="ChEBI" id="CHEBI:84422"/>
        <dbReference type="EC" id="1.14.99.60"/>
    </reaction>
</comment>
<comment type="cofactor">
    <cofactor evidence="1">
        <name>Fe cation</name>
        <dbReference type="ChEBI" id="CHEBI:24875"/>
    </cofactor>
    <text evidence="1">Binds 2 iron ions per subunit.</text>
</comment>
<comment type="pathway">
    <text evidence="1">Cofactor biosynthesis; ubiquinone biosynthesis.</text>
</comment>
<comment type="subcellular location">
    <subcellularLocation>
        <location evidence="1">Cell membrane</location>
        <topology evidence="1">Peripheral membrane protein</topology>
    </subcellularLocation>
</comment>
<comment type="similarity">
    <text evidence="1">Belongs to the COQ7 family.</text>
</comment>
<evidence type="ECO:0000255" key="1">
    <source>
        <dbReference type="HAMAP-Rule" id="MF_01658"/>
    </source>
</evidence>
<proteinExistence type="inferred from homology"/>
<organism>
    <name type="scientific">Legionella pneumophila (strain Paris)</name>
    <dbReference type="NCBI Taxonomy" id="297246"/>
    <lineage>
        <taxon>Bacteria</taxon>
        <taxon>Pseudomonadati</taxon>
        <taxon>Pseudomonadota</taxon>
        <taxon>Gammaproteobacteria</taxon>
        <taxon>Legionellales</taxon>
        <taxon>Legionellaceae</taxon>
        <taxon>Legionella</taxon>
    </lineage>
</organism>
<name>COQ7_LEGPA</name>
<keyword id="KW-1003">Cell membrane</keyword>
<keyword id="KW-0408">Iron</keyword>
<keyword id="KW-0472">Membrane</keyword>
<keyword id="KW-0479">Metal-binding</keyword>
<keyword id="KW-0503">Monooxygenase</keyword>
<keyword id="KW-0560">Oxidoreductase</keyword>
<keyword id="KW-0831">Ubiquinone biosynthesis</keyword>
<dbReference type="EC" id="1.14.99.60" evidence="1"/>
<dbReference type="EMBL" id="CR628336">
    <property type="protein sequence ID" value="CAH11176.1"/>
    <property type="molecule type" value="Genomic_DNA"/>
</dbReference>
<dbReference type="RefSeq" id="WP_011212672.1">
    <property type="nucleotide sequence ID" value="NC_006368.1"/>
</dbReference>
<dbReference type="SMR" id="Q5X963"/>
<dbReference type="KEGG" id="lpp:lpp0028"/>
<dbReference type="LegioList" id="lpp0028"/>
<dbReference type="HOGENOM" id="CLU_088601_0_0_6"/>
<dbReference type="UniPathway" id="UPA00232"/>
<dbReference type="GO" id="GO:0005886">
    <property type="term" value="C:plasma membrane"/>
    <property type="evidence" value="ECO:0007669"/>
    <property type="project" value="UniProtKB-SubCell"/>
</dbReference>
<dbReference type="GO" id="GO:0008682">
    <property type="term" value="F:3-demethoxyubiquinol 3-hydroxylase activity"/>
    <property type="evidence" value="ECO:0007669"/>
    <property type="project" value="UniProtKB-EC"/>
</dbReference>
<dbReference type="GO" id="GO:0046872">
    <property type="term" value="F:metal ion binding"/>
    <property type="evidence" value="ECO:0007669"/>
    <property type="project" value="UniProtKB-KW"/>
</dbReference>
<dbReference type="GO" id="GO:0006744">
    <property type="term" value="P:ubiquinone biosynthetic process"/>
    <property type="evidence" value="ECO:0007669"/>
    <property type="project" value="UniProtKB-UniRule"/>
</dbReference>
<dbReference type="CDD" id="cd01042">
    <property type="entry name" value="DMQH"/>
    <property type="match status" value="1"/>
</dbReference>
<dbReference type="Gene3D" id="1.20.1260.10">
    <property type="match status" value="1"/>
</dbReference>
<dbReference type="HAMAP" id="MF_01658">
    <property type="entry name" value="COQ7"/>
    <property type="match status" value="1"/>
</dbReference>
<dbReference type="InterPro" id="IPR047809">
    <property type="entry name" value="COQ7_proteobact"/>
</dbReference>
<dbReference type="InterPro" id="IPR012347">
    <property type="entry name" value="Ferritin-like"/>
</dbReference>
<dbReference type="InterPro" id="IPR009078">
    <property type="entry name" value="Ferritin-like_SF"/>
</dbReference>
<dbReference type="InterPro" id="IPR011566">
    <property type="entry name" value="Ubq_synth_Coq7"/>
</dbReference>
<dbReference type="NCBIfam" id="NF033656">
    <property type="entry name" value="DMQ_monoox_COQ7"/>
    <property type="match status" value="1"/>
</dbReference>
<dbReference type="PANTHER" id="PTHR11237:SF4">
    <property type="entry name" value="5-DEMETHOXYUBIQUINONE HYDROXYLASE, MITOCHONDRIAL"/>
    <property type="match status" value="1"/>
</dbReference>
<dbReference type="PANTHER" id="PTHR11237">
    <property type="entry name" value="COENZYME Q10 BIOSYNTHESIS PROTEIN 7"/>
    <property type="match status" value="1"/>
</dbReference>
<dbReference type="Pfam" id="PF03232">
    <property type="entry name" value="COQ7"/>
    <property type="match status" value="1"/>
</dbReference>
<dbReference type="SUPFAM" id="SSF47240">
    <property type="entry name" value="Ferritin-like"/>
    <property type="match status" value="1"/>
</dbReference>
<reference key="1">
    <citation type="journal article" date="2004" name="Nat. Genet.">
        <title>Evidence in the Legionella pneumophila genome for exploitation of host cell functions and high genome plasticity.</title>
        <authorList>
            <person name="Cazalet C."/>
            <person name="Rusniok C."/>
            <person name="Brueggemann H."/>
            <person name="Zidane N."/>
            <person name="Magnier A."/>
            <person name="Ma L."/>
            <person name="Tichit M."/>
            <person name="Jarraud S."/>
            <person name="Bouchier C."/>
            <person name="Vandenesch F."/>
            <person name="Kunst F."/>
            <person name="Etienne J."/>
            <person name="Glaser P."/>
            <person name="Buchrieser C."/>
        </authorList>
    </citation>
    <scope>NUCLEOTIDE SEQUENCE [LARGE SCALE GENOMIC DNA]</scope>
    <source>
        <strain>Paris</strain>
    </source>
</reference>